<organism>
    <name type="scientific">Plasmodium falciparum (isolate 3D7)</name>
    <dbReference type="NCBI Taxonomy" id="36329"/>
    <lineage>
        <taxon>Eukaryota</taxon>
        <taxon>Sar</taxon>
        <taxon>Alveolata</taxon>
        <taxon>Apicomplexa</taxon>
        <taxon>Aconoidasida</taxon>
        <taxon>Haemosporida</taxon>
        <taxon>Plasmodiidae</taxon>
        <taxon>Plasmodium</taxon>
        <taxon>Plasmodium (Laverania)</taxon>
    </lineage>
</organism>
<dbReference type="EMBL" id="LN999947">
    <property type="protein sequence ID" value="CZT99445.1"/>
    <property type="molecule type" value="Genomic_DNA"/>
</dbReference>
<dbReference type="EMBL" id="FJ406826">
    <property type="protein sequence ID" value="ACR10075.1"/>
    <property type="molecule type" value="Genomic_DNA"/>
</dbReference>
<dbReference type="RefSeq" id="XP_001350683.1">
    <property type="nucleotide sequence ID" value="XM_001350647.1"/>
</dbReference>
<dbReference type="PDB" id="2MU9">
    <property type="method" value="NMR"/>
    <property type="chains" value="A=161-180"/>
</dbReference>
<dbReference type="PDBsum" id="2MU9"/>
<dbReference type="BMRB" id="Q8I5D2"/>
<dbReference type="SMR" id="Q8I5D2"/>
<dbReference type="BioGRID" id="1206700">
    <property type="interactions" value="45"/>
</dbReference>
<dbReference type="FunCoup" id="Q8I5D2">
    <property type="interactions" value="6"/>
</dbReference>
<dbReference type="IntAct" id="Q8I5D2">
    <property type="interactions" value="39"/>
</dbReference>
<dbReference type="STRING" id="36329.Q8I5D2"/>
<dbReference type="PaxDb" id="5833-PFL1385c"/>
<dbReference type="EnsemblProtists" id="CZT99445">
    <property type="protein sequence ID" value="CZT99445"/>
    <property type="gene ID" value="PF3D7_1228600"/>
</dbReference>
<dbReference type="GeneID" id="811329"/>
<dbReference type="KEGG" id="pfa:PF3D7_1228600"/>
<dbReference type="VEuPathDB" id="PlasmoDB:PF3D7_1228600"/>
<dbReference type="VEuPathDB" id="PlasmoDB:Pf7G8-2_000378400"/>
<dbReference type="VEuPathDB" id="PlasmoDB:Pf7G8_120034100"/>
<dbReference type="VEuPathDB" id="PlasmoDB:PfCD01_120033500"/>
<dbReference type="VEuPathDB" id="PlasmoDB:PfDd2_120033600"/>
<dbReference type="VEuPathDB" id="PlasmoDB:PfGA01_120033300"/>
<dbReference type="VEuPathDB" id="PlasmoDB:PfGB4_120034000"/>
<dbReference type="VEuPathDB" id="PlasmoDB:PfGN01_120034600"/>
<dbReference type="VEuPathDB" id="PlasmoDB:PfHB3_120033400"/>
<dbReference type="VEuPathDB" id="PlasmoDB:PfIT_120033700"/>
<dbReference type="VEuPathDB" id="PlasmoDB:PfKE01_120033600"/>
<dbReference type="VEuPathDB" id="PlasmoDB:PfKH01_120035000"/>
<dbReference type="VEuPathDB" id="PlasmoDB:PfKH02_120033700"/>
<dbReference type="VEuPathDB" id="PlasmoDB:PfNF135_120033800"/>
<dbReference type="VEuPathDB" id="PlasmoDB:PfNF54_120033400"/>
<dbReference type="VEuPathDB" id="PlasmoDB:PfSD01_120033500"/>
<dbReference type="VEuPathDB" id="PlasmoDB:PfSN01_120034200"/>
<dbReference type="VEuPathDB" id="PlasmoDB:PfTG01_120033500"/>
<dbReference type="HOGENOM" id="CLU_374079_0_0_1"/>
<dbReference type="OMA" id="MKECKHL"/>
<dbReference type="OrthoDB" id="371803at2759"/>
<dbReference type="PhylomeDB" id="Q8I5D2"/>
<dbReference type="EvolutionaryTrace" id="Q8I5D2"/>
<dbReference type="Proteomes" id="UP000001450">
    <property type="component" value="Chromosome 12"/>
</dbReference>
<dbReference type="GO" id="GO:0016020">
    <property type="term" value="C:membrane"/>
    <property type="evidence" value="ECO:0000314"/>
    <property type="project" value="GeneDB"/>
</dbReference>
<dbReference type="GO" id="GO:0005886">
    <property type="term" value="C:plasma membrane"/>
    <property type="evidence" value="ECO:0007669"/>
    <property type="project" value="UniProtKB-SubCell"/>
</dbReference>
<dbReference type="GO" id="GO:0020003">
    <property type="term" value="C:symbiont-containing vacuole"/>
    <property type="evidence" value="ECO:0000314"/>
    <property type="project" value="GeneDB"/>
</dbReference>
<dbReference type="PANTHER" id="PTHR13275:SF4">
    <property type="entry name" value="VACUOLAR PROTEIN SORTING-ASSOCIATED PROTEIN 72 HOMOLOG"/>
    <property type="match status" value="1"/>
</dbReference>
<dbReference type="PANTHER" id="PTHR13275">
    <property type="entry name" value="YL-1 PROTEIN TRANSCRIPTION FACTOR-LIKE 1"/>
    <property type="match status" value="1"/>
</dbReference>
<reference key="1">
    <citation type="journal article" date="2002" name="Nature">
        <title>Genome sequence of the human malaria parasite Plasmodium falciparum.</title>
        <authorList>
            <person name="Gardner M.J."/>
            <person name="Hall N."/>
            <person name="Fung E."/>
            <person name="White O."/>
            <person name="Berriman M."/>
            <person name="Hyman R.W."/>
            <person name="Carlton J.M."/>
            <person name="Pain A."/>
            <person name="Nelson K.E."/>
            <person name="Bowman S."/>
            <person name="Paulsen I.T."/>
            <person name="James K.D."/>
            <person name="Eisen J.A."/>
            <person name="Rutherford K.M."/>
            <person name="Salzberg S.L."/>
            <person name="Craig A."/>
            <person name="Kyes S."/>
            <person name="Chan M.-S."/>
            <person name="Nene V."/>
            <person name="Shallom S.J."/>
            <person name="Suh B."/>
            <person name="Peterson J."/>
            <person name="Angiuoli S."/>
            <person name="Pertea M."/>
            <person name="Allen J."/>
            <person name="Selengut J."/>
            <person name="Haft D."/>
            <person name="Mather M.W."/>
            <person name="Vaidya A.B."/>
            <person name="Martin D.M.A."/>
            <person name="Fairlamb A.H."/>
            <person name="Fraunholz M.J."/>
            <person name="Roos D.S."/>
            <person name="Ralph S.A."/>
            <person name="McFadden G.I."/>
            <person name="Cummings L.M."/>
            <person name="Subramanian G.M."/>
            <person name="Mungall C."/>
            <person name="Venter J.C."/>
            <person name="Carucci D.J."/>
            <person name="Hoffman S.L."/>
            <person name="Newbold C."/>
            <person name="Davis R.W."/>
            <person name="Fraser C.M."/>
            <person name="Barrell B.G."/>
        </authorList>
    </citation>
    <scope>NUCLEOTIDE SEQUENCE [LARGE SCALE GENOMIC DNA]</scope>
    <source>
        <strain>3D7</strain>
    </source>
</reference>
<reference evidence="12" key="2">
    <citation type="journal article" date="2009" name="PLoS ONE">
        <title>Prospective identification of malaria parasite genes under balancing selection.</title>
        <authorList>
            <person name="Tetteh K.K."/>
            <person name="Stewart L.B."/>
            <person name="Ochola L.I."/>
            <person name="Amambua-Ngwa A."/>
            <person name="Thomas A.W."/>
            <person name="Marsh K."/>
            <person name="Weedall G.D."/>
            <person name="Conway D.J."/>
        </authorList>
    </citation>
    <scope>NUCLEOTIDE SEQUENCE [GENOMIC DNA] OF 15-734</scope>
    <source>
        <strain evidence="12">3D7</strain>
    </source>
</reference>
<reference key="3">
    <citation type="journal article" date="2000" name="Mol. Biochem. Parasitol.">
        <title>Expression and characterisation of Plasmodium falciparum acidic basic repeat antigen expressed in Escherichia coli.</title>
        <authorList>
            <person name="Kushwaha A."/>
            <person name="Rao P.P."/>
            <person name="Duttu V.S."/>
            <person name="Malhotra P."/>
            <person name="Chauhan V.S."/>
        </authorList>
    </citation>
    <scope>CATALYTIC ACTIVITY</scope>
    <source>
        <strain evidence="5">FID-3 (Indian isolate)</strain>
    </source>
</reference>
<reference key="4">
    <citation type="journal article" date="2004" name="J. Biol. Chem.">
        <title>A co-ligand complex anchors Plasmodium falciparum merozoites to the erythrocyte invasion receptor band 3.</title>
        <authorList>
            <person name="Li X."/>
            <person name="Chen H."/>
            <person name="Oo T.H."/>
            <person name="Daly T.M."/>
            <person name="Bergman L.W."/>
            <person name="Liu S.C."/>
            <person name="Chishti A.H."/>
            <person name="Oh S.S."/>
        </authorList>
    </citation>
    <scope>FUNCTION</scope>
    <scope>INTERACTION WITH MSP1 AND HUMAN SLC4A1</scope>
    <scope>SUBCELLULAR LOCATION</scope>
    <scope>DEVELOPMENTAL STAGE</scope>
</reference>
<reference key="5">
    <citation type="journal article" date="2005" name="Biochem. Biophys. Res. Commun.">
        <title>Two Plasmodium falciparum merozoite proteins binding to erythrocyte band 3 form a direct complex.</title>
        <authorList>
            <person name="Kariuki M.M."/>
            <person name="Li X."/>
            <person name="Yamodo I."/>
            <person name="Chishti A.H."/>
            <person name="Oh S.S."/>
        </authorList>
    </citation>
    <scope>INTERACTION WITH MSP1</scope>
</reference>
<reference key="6">
    <citation type="journal article" date="2018" name="Biochem. J.">
        <title>Protein-protein interaction studies reveal the Plasmodium falciparum merozoite surface protein-1 region involved in a complex formation that binds to human erythrocytes.</title>
        <authorList>
            <person name="Paul G."/>
            <person name="Deshmukh A."/>
            <person name="Kumar Chourasia B."/>
            <person name="Kalamuddin M."/>
            <person name="Panda A."/>
            <person name="Kumar Singh S."/>
            <person name="Gupta P.K."/>
            <person name="Mohmmed A."/>
            <person name="Chauhan V.S."/>
            <person name="Theisen M."/>
            <person name="Malhotra P."/>
        </authorList>
    </citation>
    <scope>FUNCTION</scope>
    <scope>IDENTIFICATION IN A COMPLEX WITH MSP6</scope>
    <scope>MSP7</scope>
    <scope>MSP1 AND MSP3</scope>
    <scope>SUBCELLULAR LOCATION</scope>
</reference>
<reference evidence="13" key="7">
    <citation type="journal article" date="2004" name="Biochem. Biophys. Res. Commun.">
        <title>Changing ABRA protein peptide to fit into the HLA-DRbeta1*0301 molecule renders it protection-inducing.</title>
        <authorList>
            <person name="Salazar L.M."/>
            <person name="Alba M.P."/>
            <person name="Curtidor H."/>
            <person name="Bermudez A."/>
            <person name="Vargas L.E."/>
            <person name="Rivera Z.J."/>
            <person name="Patarroyo M.E."/>
        </authorList>
    </citation>
    <scope>STRUCTURE BY NMR OF 161-180</scope>
</reference>
<feature type="signal peptide" evidence="3">
    <location>
        <begin position="1"/>
        <end position="23"/>
    </location>
</feature>
<feature type="chain" id="PRO_0000233385" description="Merozoite surface protein 9" evidence="3">
    <location>
        <begin position="24"/>
        <end position="743"/>
    </location>
</feature>
<feature type="repeat" description="1" evidence="1">
    <location>
        <begin position="226"/>
        <end position="231"/>
    </location>
</feature>
<feature type="repeat" description="2" evidence="1">
    <location>
        <begin position="232"/>
        <end position="237"/>
    </location>
</feature>
<feature type="repeat" description="3" evidence="1">
    <location>
        <begin position="238"/>
        <end position="243"/>
    </location>
</feature>
<feature type="repeat" description="4" evidence="1">
    <location>
        <begin position="244"/>
        <end position="249"/>
    </location>
</feature>
<feature type="repeat" description="5" evidence="1">
    <location>
        <begin position="250"/>
        <end position="255"/>
    </location>
</feature>
<feature type="repeat" description="6" evidence="1">
    <location>
        <begin position="256"/>
        <end position="261"/>
    </location>
</feature>
<feature type="repeat" description="7" evidence="1">
    <location>
        <begin position="262"/>
        <end position="267"/>
    </location>
</feature>
<feature type="repeat" description="8" evidence="1">
    <location>
        <begin position="268"/>
        <end position="273"/>
    </location>
</feature>
<feature type="region of interest" description="Interaction with MSP1 and host SLC4A1/Band 3" evidence="6 7">
    <location>
        <begin position="77"/>
        <end position="235"/>
    </location>
</feature>
<feature type="region of interest" description="Disordered" evidence="4">
    <location>
        <begin position="202"/>
        <end position="282"/>
    </location>
</feature>
<feature type="region of interest" description="8 X 6 AA tandem repeats of [VT]-N-D-[ED]-[ED]-D" evidence="1">
    <location>
        <begin position="226"/>
        <end position="273"/>
    </location>
</feature>
<feature type="region of interest" description="Interaction with MSP1 and host SLC4A1/Band 3" evidence="6 7">
    <location>
        <begin position="364"/>
        <end position="528"/>
    </location>
</feature>
<feature type="region of interest" description="Disordered" evidence="4">
    <location>
        <begin position="459"/>
        <end position="487"/>
    </location>
</feature>
<feature type="region of interest" description="Disordered" evidence="4">
    <location>
        <begin position="512"/>
        <end position="540"/>
    </location>
</feature>
<feature type="region of interest" description="Disordered" evidence="4">
    <location>
        <begin position="666"/>
        <end position="743"/>
    </location>
</feature>
<feature type="coiled-coil region" evidence="3">
    <location>
        <begin position="644"/>
        <end position="733"/>
    </location>
</feature>
<feature type="compositionally biased region" description="Polar residues" evidence="4">
    <location>
        <begin position="211"/>
        <end position="224"/>
    </location>
</feature>
<feature type="compositionally biased region" description="Acidic residues" evidence="4">
    <location>
        <begin position="226"/>
        <end position="274"/>
    </location>
</feature>
<feature type="compositionally biased region" description="Basic and acidic residues" evidence="4">
    <location>
        <begin position="459"/>
        <end position="473"/>
    </location>
</feature>
<feature type="compositionally biased region" description="Low complexity" evidence="4">
    <location>
        <begin position="512"/>
        <end position="521"/>
    </location>
</feature>
<feature type="compositionally biased region" description="Basic and acidic residues" evidence="4">
    <location>
        <begin position="672"/>
        <end position="721"/>
    </location>
</feature>
<feature type="compositionally biased region" description="Acidic residues" evidence="4">
    <location>
        <begin position="722"/>
        <end position="733"/>
    </location>
</feature>
<feature type="helix" evidence="14">
    <location>
        <begin position="166"/>
        <end position="177"/>
    </location>
</feature>
<name>MSP9_PLAF7</name>
<protein>
    <recommendedName>
        <fullName evidence="10">Merozoite surface protein 9</fullName>
    </recommendedName>
    <alternativeName>
        <fullName evidence="11">101 kDa malaria antigen</fullName>
    </alternativeName>
    <alternativeName>
        <fullName evidence="9">Acidic basic repeat antigen</fullName>
    </alternativeName>
    <alternativeName>
        <fullName evidence="9">p101 protein</fullName>
    </alternativeName>
</protein>
<sequence length="743" mass="86623">MMNMKIVLFSLLLFVIRWNIISCNKNDKNQGVDMNVLNNYENLFKFVKCEYCNEHTYVKGKKAPSDPQCADIKEECKELLKEKQYTDSVTYLMDGFKSANNSANNGKKNNAEEMKNLVNFLQSHKKLIKALKKNIESIQNKKHLIYKNKSYNPLLLSCVKKMNMLKENVDYIQKNQNLFKELMNQKATYSFVNTKKKIISLKSQGHKKETSQNQNENNDNQKYQEVNDEDDVNDEEDTNDDEDTNDEEDTNDDEDTNDDEDTNDEEDTNDEEDHENNNATAYELGIVPVNDVLNVNMKNMITGNNFMDVVKNTLAQSGGLGSNDLINFLNQGKEIGENLLNITKMNLGDKNNLESFPLDELNMLKDNLINYEFILDNLKTSVLNKLKDLLLRLLYKAYVSYKKRKAQEKGLPEPTVTNEEYVEELKKGILDMGIKLLFSKVKSLLKKLKNKIFPKKKEDNQAVDTKSMEEPKVKAQPALRGVEPTEDSNIMNSINNVMDEIDFFEKELIENNNTPNVVPPTQSKKKNKNETVSGMDENFDNHPENYFKEEYYYDENDDMEVKVKKIGVTLKKFEPLKNGNVSETIKLIHLGNKDKKHIEAINNDIQIIKQELQAIYNELMNYTNGNKNIQQIFQQNILENDVLNQETEEEMEKQVEAITKQIEAEVDALAPKNKEEEEKEKEKEEKEKEEKEKEKEEKEKEEKEKEEKEKEEKEEEKKEKEEEQEEEEEEEIVPENLTTEESK</sequence>
<accession>Q8I5D2</accession>
<accession>A0A144A026</accession>
<accession>C5HEG1</accession>
<comment type="function">
    <text evidence="6 8">During the asexual blood stage, involved in the sialic acid-independent (SAID) merozoite invasion of host erythrocytes by binding to host SLC4A1/Band 3 protein on the surface of the host erythrocyte.</text>
</comment>
<comment type="subunit">
    <text evidence="6 7 8">Forms a complex composed of MSP1, MSP6, MSP7, MSP9 and MSP3; within the complex, MSP6 and MSP9 mediate the binding to the host erythrocyte (PubMed:29511044). Interacts with MSP1 subunits p19 and p42; the interaction is direct (PubMed:14630931, PubMed:16289042). Interacts with host SLC4A1/Band 3 protein (via the 5ABC region) (PubMed:14630931). MSP1 subunits p19 or p42, and MSP9 form a co-ligand complex that interacts with host SLC4A1/Band 3 protein (PubMed:14630931, PubMed:16289042).</text>
</comment>
<comment type="subcellular location">
    <subcellularLocation>
        <location evidence="2">Cell membrane</location>
        <topology evidence="2">Peripheral membrane protein</topology>
        <orientation evidence="2">Extracellular side</orientation>
    </subcellularLocation>
    <subcellularLocation>
        <location evidence="2">Parasitophorous vacuole lumen</location>
    </subcellularLocation>
    <subcellularLocation>
        <location evidence="6 8">Secreted</location>
    </subcellularLocation>
    <text evidence="2">Localizes to the merozoite surface at the time of schizont rupture.</text>
</comment>
<comment type="developmental stage">
    <text evidence="6">Expressed during the asexual blood stage, including in merozoites (at protein level).</text>
</comment>
<comment type="PTM">
    <text evidence="1">Not glycosylated.</text>
</comment>
<comment type="similarity">
    <text evidence="11">Belongs to the plasmodium ABRA family.</text>
</comment>
<comment type="caution">
    <text evidence="5 10">A truncated form of MSP9 has serine protease activity in vitro; however, it is not clear if this is physiologically relevant (PubMed:10699251). Also, the putative residues forming the catalytic triad (His-55, Asp-94, and Ser-190) are not conserved in P.vivax, P.knowlesi, and P.cynomolgi orthologs casting a doubt on the physiological relevance of the protease activity (PubMed:14630931).</text>
</comment>
<gene>
    <name evidence="10" type="primary">MSP9</name>
    <name evidence="9" type="synonym">ABRA</name>
    <name type="ORF">PF3D7_1228600</name>
    <name type="ORF">PFL1385c</name>
</gene>
<evidence type="ECO:0000250" key="1">
    <source>
        <dbReference type="UniProtKB" id="P22620"/>
    </source>
</evidence>
<evidence type="ECO:0000250" key="2">
    <source>
        <dbReference type="UniProtKB" id="W7F8N2"/>
    </source>
</evidence>
<evidence type="ECO:0000255" key="3"/>
<evidence type="ECO:0000256" key="4">
    <source>
        <dbReference type="SAM" id="MobiDB-lite"/>
    </source>
</evidence>
<evidence type="ECO:0000269" key="5">
    <source>
    </source>
</evidence>
<evidence type="ECO:0000269" key="6">
    <source>
    </source>
</evidence>
<evidence type="ECO:0000269" key="7">
    <source>
    </source>
</evidence>
<evidence type="ECO:0000269" key="8">
    <source>
    </source>
</evidence>
<evidence type="ECO:0000303" key="9">
    <source>
    </source>
</evidence>
<evidence type="ECO:0000303" key="10">
    <source>
    </source>
</evidence>
<evidence type="ECO:0000305" key="11"/>
<evidence type="ECO:0000312" key="12">
    <source>
        <dbReference type="EMBL" id="ACR10075.1"/>
    </source>
</evidence>
<evidence type="ECO:0007744" key="13">
    <source>
        <dbReference type="PDB" id="2MU9"/>
    </source>
</evidence>
<evidence type="ECO:0007829" key="14">
    <source>
        <dbReference type="PDB" id="2MU9"/>
    </source>
</evidence>
<proteinExistence type="evidence at protein level"/>
<keyword id="KW-0002">3D-structure</keyword>
<keyword id="KW-1003">Cell membrane</keyword>
<keyword id="KW-0175">Coiled coil</keyword>
<keyword id="KW-0461">Malaria</keyword>
<keyword id="KW-0472">Membrane</keyword>
<keyword id="KW-1185">Reference proteome</keyword>
<keyword id="KW-0677">Repeat</keyword>
<keyword id="KW-0964">Secreted</keyword>
<keyword id="KW-0732">Signal</keyword>